<reference evidence="14" key="1">
    <citation type="journal article" date="2005" name="Proc. Natl. Acad. Sci. U.S.A.">
        <title>Syncytin-A and syncytin-B, two fusogenic placenta-specific murine envelope genes of retroviral origin conserved in Muridae.</title>
        <authorList>
            <person name="Dupressoir A."/>
            <person name="Marceau G."/>
            <person name="Vernochet C."/>
            <person name="Benit L."/>
            <person name="Kanellopoulos C."/>
            <person name="Sapin V."/>
            <person name="Heidmann T."/>
        </authorList>
    </citation>
    <scope>NUCLEOTIDE SEQUENCE [GENOMIC DNA]</scope>
    <scope>FUNCTION</scope>
    <scope>TISSUE SPECIFICITY</scope>
    <scope>DEVELOPMENTAL STAGE</scope>
    <source>
        <strain evidence="14">C57BL/6J</strain>
    </source>
</reference>
<reference evidence="15" key="2">
    <citation type="journal article" date="2005" name="Science">
        <title>The transcriptional landscape of the mammalian genome.</title>
        <authorList>
            <person name="Carninci P."/>
            <person name="Kasukawa T."/>
            <person name="Katayama S."/>
            <person name="Gough J."/>
            <person name="Frith M.C."/>
            <person name="Maeda N."/>
            <person name="Oyama R."/>
            <person name="Ravasi T."/>
            <person name="Lenhard B."/>
            <person name="Wells C."/>
            <person name="Kodzius R."/>
            <person name="Shimokawa K."/>
            <person name="Bajic V.B."/>
            <person name="Brenner S.E."/>
            <person name="Batalov S."/>
            <person name="Forrest A.R."/>
            <person name="Zavolan M."/>
            <person name="Davis M.J."/>
            <person name="Wilming L.G."/>
            <person name="Aidinis V."/>
            <person name="Allen J.E."/>
            <person name="Ambesi-Impiombato A."/>
            <person name="Apweiler R."/>
            <person name="Aturaliya R.N."/>
            <person name="Bailey T.L."/>
            <person name="Bansal M."/>
            <person name="Baxter L."/>
            <person name="Beisel K.W."/>
            <person name="Bersano T."/>
            <person name="Bono H."/>
            <person name="Chalk A.M."/>
            <person name="Chiu K.P."/>
            <person name="Choudhary V."/>
            <person name="Christoffels A."/>
            <person name="Clutterbuck D.R."/>
            <person name="Crowe M.L."/>
            <person name="Dalla E."/>
            <person name="Dalrymple B.P."/>
            <person name="de Bono B."/>
            <person name="Della Gatta G."/>
            <person name="di Bernardo D."/>
            <person name="Down T."/>
            <person name="Engstrom P."/>
            <person name="Fagiolini M."/>
            <person name="Faulkner G."/>
            <person name="Fletcher C.F."/>
            <person name="Fukushima T."/>
            <person name="Furuno M."/>
            <person name="Futaki S."/>
            <person name="Gariboldi M."/>
            <person name="Georgii-Hemming P."/>
            <person name="Gingeras T.R."/>
            <person name="Gojobori T."/>
            <person name="Green R.E."/>
            <person name="Gustincich S."/>
            <person name="Harbers M."/>
            <person name="Hayashi Y."/>
            <person name="Hensch T.K."/>
            <person name="Hirokawa N."/>
            <person name="Hill D."/>
            <person name="Huminiecki L."/>
            <person name="Iacono M."/>
            <person name="Ikeo K."/>
            <person name="Iwama A."/>
            <person name="Ishikawa T."/>
            <person name="Jakt M."/>
            <person name="Kanapin A."/>
            <person name="Katoh M."/>
            <person name="Kawasawa Y."/>
            <person name="Kelso J."/>
            <person name="Kitamura H."/>
            <person name="Kitano H."/>
            <person name="Kollias G."/>
            <person name="Krishnan S.P."/>
            <person name="Kruger A."/>
            <person name="Kummerfeld S.K."/>
            <person name="Kurochkin I.V."/>
            <person name="Lareau L.F."/>
            <person name="Lazarevic D."/>
            <person name="Lipovich L."/>
            <person name="Liu J."/>
            <person name="Liuni S."/>
            <person name="McWilliam S."/>
            <person name="Madan Babu M."/>
            <person name="Madera M."/>
            <person name="Marchionni L."/>
            <person name="Matsuda H."/>
            <person name="Matsuzawa S."/>
            <person name="Miki H."/>
            <person name="Mignone F."/>
            <person name="Miyake S."/>
            <person name="Morris K."/>
            <person name="Mottagui-Tabar S."/>
            <person name="Mulder N."/>
            <person name="Nakano N."/>
            <person name="Nakauchi H."/>
            <person name="Ng P."/>
            <person name="Nilsson R."/>
            <person name="Nishiguchi S."/>
            <person name="Nishikawa S."/>
            <person name="Nori F."/>
            <person name="Ohara O."/>
            <person name="Okazaki Y."/>
            <person name="Orlando V."/>
            <person name="Pang K.C."/>
            <person name="Pavan W.J."/>
            <person name="Pavesi G."/>
            <person name="Pesole G."/>
            <person name="Petrovsky N."/>
            <person name="Piazza S."/>
            <person name="Reed J."/>
            <person name="Reid J.F."/>
            <person name="Ring B.Z."/>
            <person name="Ringwald M."/>
            <person name="Rost B."/>
            <person name="Ruan Y."/>
            <person name="Salzberg S.L."/>
            <person name="Sandelin A."/>
            <person name="Schneider C."/>
            <person name="Schoenbach C."/>
            <person name="Sekiguchi K."/>
            <person name="Semple C.A."/>
            <person name="Seno S."/>
            <person name="Sessa L."/>
            <person name="Sheng Y."/>
            <person name="Shibata Y."/>
            <person name="Shimada H."/>
            <person name="Shimada K."/>
            <person name="Silva D."/>
            <person name="Sinclair B."/>
            <person name="Sperling S."/>
            <person name="Stupka E."/>
            <person name="Sugiura K."/>
            <person name="Sultana R."/>
            <person name="Takenaka Y."/>
            <person name="Taki K."/>
            <person name="Tammoja K."/>
            <person name="Tan S.L."/>
            <person name="Tang S."/>
            <person name="Taylor M.S."/>
            <person name="Tegner J."/>
            <person name="Teichmann S.A."/>
            <person name="Ueda H.R."/>
            <person name="van Nimwegen E."/>
            <person name="Verardo R."/>
            <person name="Wei C.L."/>
            <person name="Yagi K."/>
            <person name="Yamanishi H."/>
            <person name="Zabarovsky E."/>
            <person name="Zhu S."/>
            <person name="Zimmer A."/>
            <person name="Hide W."/>
            <person name="Bult C."/>
            <person name="Grimmond S.M."/>
            <person name="Teasdale R.D."/>
            <person name="Liu E.T."/>
            <person name="Brusic V."/>
            <person name="Quackenbush J."/>
            <person name="Wahlestedt C."/>
            <person name="Mattick J.S."/>
            <person name="Hume D.A."/>
            <person name="Kai C."/>
            <person name="Sasaki D."/>
            <person name="Tomaru Y."/>
            <person name="Fukuda S."/>
            <person name="Kanamori-Katayama M."/>
            <person name="Suzuki M."/>
            <person name="Aoki J."/>
            <person name="Arakawa T."/>
            <person name="Iida J."/>
            <person name="Imamura K."/>
            <person name="Itoh M."/>
            <person name="Kato T."/>
            <person name="Kawaji H."/>
            <person name="Kawagashira N."/>
            <person name="Kawashima T."/>
            <person name="Kojima M."/>
            <person name="Kondo S."/>
            <person name="Konno H."/>
            <person name="Nakano K."/>
            <person name="Ninomiya N."/>
            <person name="Nishio T."/>
            <person name="Okada M."/>
            <person name="Plessy C."/>
            <person name="Shibata K."/>
            <person name="Shiraki T."/>
            <person name="Suzuki S."/>
            <person name="Tagami M."/>
            <person name="Waki K."/>
            <person name="Watahiki A."/>
            <person name="Okamura-Oho Y."/>
            <person name="Suzuki H."/>
            <person name="Kawai J."/>
            <person name="Hayashizaki Y."/>
        </authorList>
    </citation>
    <scope>NUCLEOTIDE SEQUENCE [LARGE SCALE MRNA]</scope>
    <source>
        <strain>C57BL/6J</strain>
        <tissue>Head</tissue>
    </source>
</reference>
<reference evidence="17" key="3">
    <citation type="journal article" date="2009" name="PLoS Biol.">
        <title>Lineage-specific biology revealed by a finished genome assembly of the mouse.</title>
        <authorList>
            <person name="Church D.M."/>
            <person name="Goodstadt L."/>
            <person name="Hillier L.W."/>
            <person name="Zody M.C."/>
            <person name="Goldstein S."/>
            <person name="She X."/>
            <person name="Bult C.J."/>
            <person name="Agarwala R."/>
            <person name="Cherry J.L."/>
            <person name="DiCuccio M."/>
            <person name="Hlavina W."/>
            <person name="Kapustin Y."/>
            <person name="Meric P."/>
            <person name="Maglott D."/>
            <person name="Birtle Z."/>
            <person name="Marques A.C."/>
            <person name="Graves T."/>
            <person name="Zhou S."/>
            <person name="Teague B."/>
            <person name="Potamousis K."/>
            <person name="Churas C."/>
            <person name="Place M."/>
            <person name="Herschleb J."/>
            <person name="Runnheim R."/>
            <person name="Forrest D."/>
            <person name="Amos-Landgraf J."/>
            <person name="Schwartz D.C."/>
            <person name="Cheng Z."/>
            <person name="Lindblad-Toh K."/>
            <person name="Eichler E.E."/>
            <person name="Ponting C.P."/>
        </authorList>
    </citation>
    <scope>NUCLEOTIDE SEQUENCE [LARGE SCALE GENOMIC DNA]</scope>
    <source>
        <strain>C57BL/6J</strain>
    </source>
</reference>
<reference evidence="13" key="4">
    <citation type="journal article" date="2004" name="Genome Res.">
        <title>The status, quality, and expansion of the NIH full-length cDNA project: the Mammalian Gene Collection (MGC).</title>
        <authorList>
            <consortium name="The MGC Project Team"/>
        </authorList>
    </citation>
    <scope>NUCLEOTIDE SEQUENCE [LARGE SCALE MRNA]</scope>
    <source>
        <tissue>Brain</tissue>
    </source>
</reference>
<reference evidence="11" key="5">
    <citation type="journal article" date="2007" name="Proc. Natl. Acad. Sci. U.S.A.">
        <title>Placental syncytins: Genetic disjunction between the fusogenic and immunosuppressive activity of retroviral envelope proteins.</title>
        <authorList>
            <person name="Mangeney M."/>
            <person name="Renard M."/>
            <person name="Schlecht-Louf G."/>
            <person name="Bouallaga I."/>
            <person name="Heidmann O."/>
            <person name="Letzelter C."/>
            <person name="Richaud A."/>
            <person name="Ducos B."/>
            <person name="Heidmann T."/>
        </authorList>
    </citation>
    <scope>FUNCTION</scope>
    <scope>MUTAGENESIS OF LYS-495</scope>
</reference>
<reference evidence="11" key="6">
    <citation type="journal article" date="2008" name="Development">
        <title>Early patterning of the chorion leads to the trilaminar trophoblast cell structure in the placental labyrinth.</title>
        <authorList>
            <person name="Simmons D.G."/>
            <person name="Natale D.R."/>
            <person name="Begay V."/>
            <person name="Hughes M."/>
            <person name="Leutz A."/>
            <person name="Cross J.C."/>
        </authorList>
    </citation>
    <scope>TISSUE SPECIFICITY</scope>
    <scope>DEVELOPMENTAL STAGE</scope>
</reference>
<reference evidence="11" key="7">
    <citation type="journal article" date="2011" name="Proc. Natl. Acad. Sci. U.S.A.">
        <title>A pair of co-opted retroviral envelope syncytin genes is required for formation of the two-layered murine placental syncytiotrophoblast.</title>
        <authorList>
            <person name="Dupressoir A."/>
            <person name="Vernochet C."/>
            <person name="Harper F."/>
            <person name="Guegan J."/>
            <person name="Dessen P."/>
            <person name="Pierron G."/>
            <person name="Heidmann T."/>
        </authorList>
    </citation>
    <scope>FUNCTION</scope>
    <scope>DISRUPTION PHENOTYPE</scope>
</reference>
<reference evidence="11" key="8">
    <citation type="journal article" date="2016" name="PLoS Genet.">
        <title>Genetic evidence that captured retroviral envelope syncytins contribute to myoblast fusion and muscle sexual dimorphism in mice.</title>
        <authorList>
            <person name="Redelsperger F."/>
            <person name="Raddi N."/>
            <person name="Bacquin A."/>
            <person name="Vernochet C."/>
            <person name="Mariot V."/>
            <person name="Gache V."/>
            <person name="Blanchard-Gutton N."/>
            <person name="Charrin S."/>
            <person name="Tiret L."/>
            <person name="Dumonceaux J."/>
            <person name="Dupressoir A."/>
            <person name="Heidmann T."/>
        </authorList>
    </citation>
    <scope>FUNCTION</scope>
    <scope>INDUCTION</scope>
</reference>
<name>SYNB_MOUSE</name>
<protein>
    <recommendedName>
        <fullName evidence="10">Syncytin-B</fullName>
    </recommendedName>
    <component>
        <recommendedName>
            <fullName evidence="10">Surface protein</fullName>
            <shortName evidence="10">SU</shortName>
        </recommendedName>
    </component>
    <component>
        <recommendedName>
            <fullName evidence="10">Transmembrane protein</fullName>
            <shortName evidence="10">TM</shortName>
        </recommendedName>
    </component>
</protein>
<keyword id="KW-1003">Cell membrane</keyword>
<keyword id="KW-0217">Developmental protein</keyword>
<keyword id="KW-1015">Disulfide bond</keyword>
<keyword id="KW-0895">ERV</keyword>
<keyword id="KW-0325">Glycoprotein</keyword>
<keyword id="KW-0472">Membrane</keyword>
<keyword id="KW-1185">Reference proteome</keyword>
<keyword id="KW-0732">Signal</keyword>
<keyword id="KW-0812">Transmembrane</keyword>
<keyword id="KW-1133">Transmembrane helix</keyword>
<evidence type="ECO:0000250" key="1">
    <source>
        <dbReference type="UniProtKB" id="P23064"/>
    </source>
</evidence>
<evidence type="ECO:0000250" key="2">
    <source>
        <dbReference type="UniProtKB" id="P60508"/>
    </source>
</evidence>
<evidence type="ECO:0000250" key="3">
    <source>
        <dbReference type="UniProtKB" id="Q9UQF0"/>
    </source>
</evidence>
<evidence type="ECO:0000255" key="4"/>
<evidence type="ECO:0000269" key="5">
    <source>
    </source>
</evidence>
<evidence type="ECO:0000269" key="6">
    <source>
    </source>
</evidence>
<evidence type="ECO:0000269" key="7">
    <source>
    </source>
</evidence>
<evidence type="ECO:0000269" key="8">
    <source>
    </source>
</evidence>
<evidence type="ECO:0000269" key="9">
    <source>
    </source>
</evidence>
<evidence type="ECO:0000303" key="10">
    <source>
    </source>
</evidence>
<evidence type="ECO:0000305" key="11"/>
<evidence type="ECO:0000305" key="12">
    <source>
    </source>
</evidence>
<evidence type="ECO:0000312" key="13">
    <source>
        <dbReference type="EMBL" id="AAI37939.1"/>
    </source>
</evidence>
<evidence type="ECO:0000312" key="14">
    <source>
        <dbReference type="EMBL" id="AAW62450.1"/>
    </source>
</evidence>
<evidence type="ECO:0000312" key="15">
    <source>
        <dbReference type="EMBL" id="BAC39647.1"/>
    </source>
</evidence>
<evidence type="ECO:0000312" key="16">
    <source>
        <dbReference type="MGI" id="MGI:3045308"/>
    </source>
</evidence>
<evidence type="ECO:0000312" key="17">
    <source>
        <dbReference type="Proteomes" id="UP000000589"/>
    </source>
</evidence>
<organism>
    <name type="scientific">Mus musculus</name>
    <name type="common">Mouse</name>
    <dbReference type="NCBI Taxonomy" id="10090"/>
    <lineage>
        <taxon>Eukaryota</taxon>
        <taxon>Metazoa</taxon>
        <taxon>Chordata</taxon>
        <taxon>Craniata</taxon>
        <taxon>Vertebrata</taxon>
        <taxon>Euteleostomi</taxon>
        <taxon>Mammalia</taxon>
        <taxon>Eutheria</taxon>
        <taxon>Euarchontoglires</taxon>
        <taxon>Glires</taxon>
        <taxon>Rodentia</taxon>
        <taxon>Myomorpha</taxon>
        <taxon>Muroidea</taxon>
        <taxon>Muridae</taxon>
        <taxon>Murinae</taxon>
        <taxon>Mus</taxon>
        <taxon>Mus</taxon>
    </lineage>
</organism>
<sequence>MTGFWVLCFVLFPSSLSYPESWMPLVNLTHHILRDTNSSLFSNCWVCLSTQTQRSLAVPAPLSIWTDTPMKLHLTYSVRPFSGSFSISDIERRLRLFRPLTASYSFHNPDRRAIAFLQLVSSTGIFRIITRITSVIYPHKDRFFESAQRPLWGPLFTETVLRSQAPLCISRFFKVSAYATFVGNLSASLCNYTMHISPSTSHENLDLSTTHTFKQAMKRPDAKWKNPLRFSGPPSLIFSKPAYYPCPTDIKHCHTSPATPWMHCPQAPFGTCYNLTLFEPDNSTHPVTMSVNPTHFKVKLQGHRDPYPLSHYQPLTGAALSGQYSVWENEITVQENWDITSNIFSHLLSFSYAFCLNSSGVFFLCGTSTYICLPANWSGVCTLVFQYPDIELLPNNQTVPVPLFASVLSSDSVLRPKRSPHLFPFLAGLGISSALGTGIAGLATSTLYFQQLSKVLSETLEEIAASITTLQNQIDSLAGVVLQNRRALDLITAEKGGTCLFLQEECCFYVNQSGIVRDAARKLQERASELGQHSDSWGQWPDLGRWLPWLTPFLGPLLFLFFLLTFGSCLLNCLTRFVSQRLGSFVQDTAKRHVDSILQNFQYKKLPQDSPDEDTIPT</sequence>
<proteinExistence type="evidence at protein level"/>
<dbReference type="EMBL" id="AY849977">
    <property type="protein sequence ID" value="AAW62450.1"/>
    <property type="molecule type" value="Genomic_DNA"/>
</dbReference>
<dbReference type="EMBL" id="AK086309">
    <property type="protein sequence ID" value="BAC39647.1"/>
    <property type="molecule type" value="mRNA"/>
</dbReference>
<dbReference type="EMBL" id="AC134575">
    <property type="status" value="NOT_ANNOTATED_CDS"/>
    <property type="molecule type" value="Genomic_DNA"/>
</dbReference>
<dbReference type="EMBL" id="BC137938">
    <property type="protein sequence ID" value="AAI37939.1"/>
    <property type="molecule type" value="mRNA"/>
</dbReference>
<dbReference type="EMBL" id="BC137956">
    <property type="protein sequence ID" value="AAI37957.1"/>
    <property type="molecule type" value="mRNA"/>
</dbReference>
<dbReference type="CCDS" id="CCDS27239.1"/>
<dbReference type="RefSeq" id="NP_775596.1">
    <property type="nucleotide sequence ID" value="NM_173420.3"/>
</dbReference>
<dbReference type="RefSeq" id="XP_006519055.1">
    <property type="nucleotide sequence ID" value="XM_006518992.4"/>
</dbReference>
<dbReference type="RefSeq" id="XP_006519057.1">
    <property type="nucleotide sequence ID" value="XM_006518994.4"/>
</dbReference>
<dbReference type="RefSeq" id="XP_006519058.1">
    <property type="nucleotide sequence ID" value="XM_006518995.4"/>
</dbReference>
<dbReference type="RefSeq" id="XP_006519059.1">
    <property type="nucleotide sequence ID" value="XM_006518996.3"/>
</dbReference>
<dbReference type="RefSeq" id="XP_030103659.1">
    <property type="nucleotide sequence ID" value="XM_030247799.1"/>
</dbReference>
<dbReference type="SMR" id="Q8BI41"/>
<dbReference type="STRING" id="10090.ENSMUSP00000061107"/>
<dbReference type="GlyCosmos" id="Q8BI41">
    <property type="glycosylation" value="4 sites, No reported glycans"/>
</dbReference>
<dbReference type="GlyGen" id="Q8BI41">
    <property type="glycosylation" value="4 sites"/>
</dbReference>
<dbReference type="iPTMnet" id="Q8BI41"/>
<dbReference type="PhosphoSitePlus" id="Q8BI41"/>
<dbReference type="PaxDb" id="10090-ENSMUSP00000061107"/>
<dbReference type="DNASU" id="239167"/>
<dbReference type="Ensembl" id="ENSMUST00000059362.3">
    <property type="protein sequence ID" value="ENSMUSP00000061107.3"/>
    <property type="gene ID" value="ENSMUSG00000047977.4"/>
</dbReference>
<dbReference type="Ensembl" id="ENSMUST00000184652.2">
    <property type="protein sequence ID" value="ENSMUSP00000139267.2"/>
    <property type="gene ID" value="ENSMUSG00000098773.2"/>
</dbReference>
<dbReference type="GeneID" id="239167"/>
<dbReference type="KEGG" id="mmu:239167"/>
<dbReference type="UCSC" id="uc007umg.1">
    <property type="organism name" value="mouse"/>
</dbReference>
<dbReference type="AGR" id="MGI:3045308"/>
<dbReference type="AGR" id="MGI:5521022"/>
<dbReference type="CTD" id="239167"/>
<dbReference type="MGI" id="MGI:3045308">
    <property type="gene designation" value="Synb"/>
</dbReference>
<dbReference type="VEuPathDB" id="HostDB:ENSMUSG00000047977"/>
<dbReference type="VEuPathDB" id="HostDB:ENSMUSG00000098773"/>
<dbReference type="eggNOG" id="ENOG502SD08">
    <property type="taxonomic scope" value="Eukaryota"/>
</dbReference>
<dbReference type="GeneTree" id="ENSGT00940000163436"/>
<dbReference type="HOGENOM" id="CLU_506176_0_0_1"/>
<dbReference type="InParanoid" id="Q8BI41"/>
<dbReference type="OMA" id="TRFCQGR"/>
<dbReference type="OrthoDB" id="9838482at2759"/>
<dbReference type="PhylomeDB" id="Q8BI41"/>
<dbReference type="TreeFam" id="TF332233"/>
<dbReference type="BioGRID-ORCS" id="239167">
    <property type="hits" value="0 hits in 45 CRISPR screens"/>
</dbReference>
<dbReference type="PRO" id="PR:Q8BI41"/>
<dbReference type="Proteomes" id="UP000000589">
    <property type="component" value="Chromosome 14"/>
</dbReference>
<dbReference type="RNAct" id="Q8BI41">
    <property type="molecule type" value="protein"/>
</dbReference>
<dbReference type="Bgee" id="ENSMUSG00000047977">
    <property type="expression patterns" value="Expressed in trophectoderm and 4 other cell types or tissues"/>
</dbReference>
<dbReference type="GO" id="GO:0005886">
    <property type="term" value="C:plasma membrane"/>
    <property type="evidence" value="ECO:0007669"/>
    <property type="project" value="UniProtKB-SubCell"/>
</dbReference>
<dbReference type="GO" id="GO:0060716">
    <property type="term" value="P:labyrinthine layer blood vessel development"/>
    <property type="evidence" value="ECO:0000315"/>
    <property type="project" value="MGI"/>
</dbReference>
<dbReference type="GO" id="GO:0007520">
    <property type="term" value="P:myoblast fusion"/>
    <property type="evidence" value="ECO:0000315"/>
    <property type="project" value="MGI"/>
</dbReference>
<dbReference type="GO" id="GO:0014905">
    <property type="term" value="P:myoblast fusion involved in skeletal muscle regeneration"/>
    <property type="evidence" value="ECO:0000315"/>
    <property type="project" value="MGI"/>
</dbReference>
<dbReference type="GO" id="GO:0007519">
    <property type="term" value="P:skeletal muscle tissue development"/>
    <property type="evidence" value="ECO:0000315"/>
    <property type="project" value="MGI"/>
</dbReference>
<dbReference type="GO" id="GO:0000768">
    <property type="term" value="P:syncytium formation by plasma membrane fusion"/>
    <property type="evidence" value="ECO:0000314"/>
    <property type="project" value="MGI"/>
</dbReference>
<dbReference type="CDD" id="cd09851">
    <property type="entry name" value="HTLV-1-like_HR1-HR2"/>
    <property type="match status" value="1"/>
</dbReference>
<dbReference type="FunFam" id="1.10.287.210:FF:000002">
    <property type="entry name" value="Syncytin-2"/>
    <property type="match status" value="1"/>
</dbReference>
<dbReference type="Gene3D" id="1.10.287.210">
    <property type="match status" value="1"/>
</dbReference>
<dbReference type="InterPro" id="IPR018154">
    <property type="entry name" value="TLV/ENV_coat_polyprotein"/>
</dbReference>
<dbReference type="PANTHER" id="PTHR10424:SF83">
    <property type="entry name" value="SYNCYTIN-B"/>
    <property type="match status" value="1"/>
</dbReference>
<dbReference type="PANTHER" id="PTHR10424">
    <property type="entry name" value="VIRAL ENVELOPE PROTEIN"/>
    <property type="match status" value="1"/>
</dbReference>
<dbReference type="Pfam" id="PF00429">
    <property type="entry name" value="TLV_coat"/>
    <property type="match status" value="1"/>
</dbReference>
<dbReference type="SUPFAM" id="SSF58069">
    <property type="entry name" value="Virus ectodomain"/>
    <property type="match status" value="1"/>
</dbReference>
<feature type="signal peptide" evidence="4">
    <location>
        <begin position="1"/>
        <end position="17"/>
    </location>
</feature>
<feature type="chain" id="PRO_5009346813" description="Syncytin-B">
    <location>
        <begin position="18"/>
        <end position="618"/>
    </location>
</feature>
<feature type="chain" id="PRO_0000440575" description="Surface protein" evidence="11">
    <location>
        <begin position="18"/>
        <end position="418"/>
    </location>
</feature>
<feature type="chain" id="PRO_0000440576" description="Transmembrane protein" evidence="11">
    <location>
        <begin position="419"/>
        <end position="618"/>
    </location>
</feature>
<feature type="topological domain" description="Extracellular" evidence="11">
    <location>
        <begin position="18"/>
        <end position="545"/>
    </location>
</feature>
<feature type="transmembrane region" description="Helical" evidence="4">
    <location>
        <begin position="546"/>
        <end position="566"/>
    </location>
</feature>
<feature type="topological domain" description="Cytoplasmic" evidence="11">
    <location>
        <begin position="567"/>
        <end position="618"/>
    </location>
</feature>
<feature type="region of interest" description="Fusion peptide" evidence="11">
    <location>
        <begin position="422"/>
        <end position="442"/>
    </location>
</feature>
<feature type="region of interest" description="Immunosuppression" evidence="12">
    <location>
        <begin position="482"/>
        <end position="498"/>
    </location>
</feature>
<feature type="short sequence motif" description="CXXC" evidence="11">
    <location>
        <begin position="44"/>
        <end position="47"/>
    </location>
</feature>
<feature type="short sequence motif" description="CX6CC" evidence="11">
    <location>
        <begin position="499"/>
        <end position="507"/>
    </location>
</feature>
<feature type="site" description="Cleavage" evidence="3">
    <location>
        <begin position="418"/>
        <end position="419"/>
    </location>
</feature>
<feature type="glycosylation site" description="N-linked (GlcNAc...) asparagine" evidence="4">
    <location>
        <position position="27"/>
    </location>
</feature>
<feature type="glycosylation site" description="N-linked (GlcNAc...) asparagine" evidence="4">
    <location>
        <position position="184"/>
    </location>
</feature>
<feature type="glycosylation site" description="N-linked (GlcNAc...) asparagine" evidence="4">
    <location>
        <position position="274"/>
    </location>
</feature>
<feature type="glycosylation site" description="N-linked (GlcNAc...) asparagine" evidence="4">
    <location>
        <position position="357"/>
    </location>
</feature>
<feature type="disulfide bond" description="Interchain (between SU and TM chains, or C-47 with C-507); in linked form" evidence="3">
    <location>
        <begin position="44"/>
        <end position="507"/>
    </location>
</feature>
<feature type="disulfide bond" evidence="1">
    <location>
        <begin position="44"/>
        <end position="47"/>
    </location>
</feature>
<feature type="disulfide bond" evidence="2">
    <location>
        <begin position="499"/>
        <end position="506"/>
    </location>
</feature>
<feature type="mutagenesis site" description="Loss of immunosuppressive activity. No effect on fusogenic activity." evidence="6">
    <original>K</original>
    <variation>R</variation>
    <location>
        <position position="495"/>
    </location>
</feature>
<comment type="function">
    <text evidence="5 6 8">This endogenous retroviral envelope protein has retained its original fusogenic properties (PubMed:15644441, PubMed:18077339, PubMed:22032925, PubMed:27589388). Together with Syna, participates in trophoblast fusion and the formation of a syncytium during placenta morphogenesis (PubMed:22032925). Synb is specifically involved in formation of syncytiotrophoblast layer II (SynT-II) (PubMed:22032925). Promotes myoblast fusion, and may play a role in regeneration of damaged muscle tissue in males (PubMed:27589388). May have immunosuppressive activity (PubMed:18077339).</text>
</comment>
<comment type="subunit">
    <text evidence="3 11">The mature protein consists of a trimer of SU-TM heterodimers (Probable). The SU-TM heterodimers are attached by a labile interchain disulfide bond (By similarity).</text>
</comment>
<comment type="subcellular location">
    <molecule>Surface protein</molecule>
    <subcellularLocation>
        <location evidence="11">Cell membrane</location>
        <topology evidence="11">Peripheral membrane protein</topology>
    </subcellularLocation>
    <text evidence="3">The surface protein is not anchored to the membrane, but localizes to the extracellular surface through its binding to TM.</text>
</comment>
<comment type="subcellular location">
    <molecule>Transmembrane protein</molecule>
    <subcellularLocation>
        <location evidence="11">Cell membrane</location>
        <topology evidence="4">Single-pass membrane protein</topology>
    </subcellularLocation>
</comment>
<comment type="tissue specificity">
    <text evidence="5 7">Highly expressed in placenta where it localizes to syncytiotrophoblasts of the labyrinthine zona (PubMed:15644441). Specifically localizes to syncytiotrophoblast layer II (SynT-II) (PubMed:18448564). Also detected at very low levels in ovary (PubMed:15644441).</text>
</comment>
<comment type="developmental stage">
    <text evidence="7">Expressed in the placental labyrinth from stage 8.5 dpc onwards.</text>
</comment>
<comment type="induction">
    <text evidence="9">In males, up-regulated in regenerating muscle tissue after injury.</text>
</comment>
<comment type="PTM">
    <text evidence="3">Synthesized as an inactive precursor that is heavily N-glycosylated and processed likely by furin in the Golgi to yield the mature SU and TM proteins. The cleavage site between SU and TM requires the minimal sequence [KR]-X-[KR]-R.</text>
</comment>
<comment type="PTM">
    <text evidence="3">The CXXC motif is highly conserved across a broad range of retroviral envelope proteins. It is thought to participate in the formation of a labile disulfide bond possibly with the CX6CC motif present in the transmembrane protein. Isomerization of the intersubunit disulfide bond to an SU intrachain disulfide bond is thought to occur upon receptor recognition in order to allow membrane fusion.</text>
</comment>
<comment type="disruption phenotype">
    <text evidence="8 9">Viable, although growth is retarded and neonate numbers are reduced (PubMed:22032925). In the placental labyrinth, formation of syncytiotrophoblast layer II (SynT-II) is abnormal with reduced cell fusion and progressive expansion of maternal blood lacunae (PubMed:22032925). Unfused SynT-II cells form dense plaque-like structures between adjacent cells, which resemble cell junctions and are associated with high expression levels of GJB6/connexin-30 (PubMed:22032925). Formation of syncytiotrophoblast layer I (SynT-I) is grossly normal (PubMed:22032925). Adult male mice have a 15% reduction in muscle mass compared to wild type, probably due to defects in myoblast fusion (PubMed:27589388). Double knockouts of Syna and Synb are embryonic lethal at stage 9.5 dpc to 10.5 dpc, indicating a more severe phenotype than the Syna single knockout (PubMed:22032925).</text>
</comment>
<comment type="miscellaneous">
    <text evidence="11">The mouse genome contains a high percentage of proviral-like elements, also called endogenous retroviruses (ERVs) that are the genomic traces of ancient infections of the germline by exogenous retroviruses. Although most of these elements are defective, some have conserved a functional envelope (env) gene, most probably diverted by the host for its benefit.</text>
</comment>
<comment type="similarity">
    <text evidence="11">Belongs to the gamma type-C retroviral envelope protein family.</text>
</comment>
<accession>Q8BI41</accession>
<accession>V9GXQ5</accession>
<gene>
    <name evidence="16" type="primary">Synb</name>
</gene>